<reference key="1">
    <citation type="journal article" date="2002" name="Nature">
        <title>The genome sequence of Schizosaccharomyces pombe.</title>
        <authorList>
            <person name="Wood V."/>
            <person name="Gwilliam R."/>
            <person name="Rajandream M.A."/>
            <person name="Lyne M.H."/>
            <person name="Lyne R."/>
            <person name="Stewart A."/>
            <person name="Sgouros J.G."/>
            <person name="Peat N."/>
            <person name="Hayles J."/>
            <person name="Baker S.G."/>
            <person name="Basham D."/>
            <person name="Bowman S."/>
            <person name="Brooks K."/>
            <person name="Brown D."/>
            <person name="Brown S."/>
            <person name="Chillingworth T."/>
            <person name="Churcher C.M."/>
            <person name="Collins M."/>
            <person name="Connor R."/>
            <person name="Cronin A."/>
            <person name="Davis P."/>
            <person name="Feltwell T."/>
            <person name="Fraser A."/>
            <person name="Gentles S."/>
            <person name="Goble A."/>
            <person name="Hamlin N."/>
            <person name="Harris D.E."/>
            <person name="Hidalgo J."/>
            <person name="Hodgson G."/>
            <person name="Holroyd S."/>
            <person name="Hornsby T."/>
            <person name="Howarth S."/>
            <person name="Huckle E.J."/>
            <person name="Hunt S."/>
            <person name="Jagels K."/>
            <person name="James K.D."/>
            <person name="Jones L."/>
            <person name="Jones M."/>
            <person name="Leather S."/>
            <person name="McDonald S."/>
            <person name="McLean J."/>
            <person name="Mooney P."/>
            <person name="Moule S."/>
            <person name="Mungall K.L."/>
            <person name="Murphy L.D."/>
            <person name="Niblett D."/>
            <person name="Odell C."/>
            <person name="Oliver K."/>
            <person name="O'Neil S."/>
            <person name="Pearson D."/>
            <person name="Quail M.A."/>
            <person name="Rabbinowitsch E."/>
            <person name="Rutherford K.M."/>
            <person name="Rutter S."/>
            <person name="Saunders D."/>
            <person name="Seeger K."/>
            <person name="Sharp S."/>
            <person name="Skelton J."/>
            <person name="Simmonds M.N."/>
            <person name="Squares R."/>
            <person name="Squares S."/>
            <person name="Stevens K."/>
            <person name="Taylor K."/>
            <person name="Taylor R.G."/>
            <person name="Tivey A."/>
            <person name="Walsh S.V."/>
            <person name="Warren T."/>
            <person name="Whitehead S."/>
            <person name="Woodward J.R."/>
            <person name="Volckaert G."/>
            <person name="Aert R."/>
            <person name="Robben J."/>
            <person name="Grymonprez B."/>
            <person name="Weltjens I."/>
            <person name="Vanstreels E."/>
            <person name="Rieger M."/>
            <person name="Schaefer M."/>
            <person name="Mueller-Auer S."/>
            <person name="Gabel C."/>
            <person name="Fuchs M."/>
            <person name="Duesterhoeft A."/>
            <person name="Fritzc C."/>
            <person name="Holzer E."/>
            <person name="Moestl D."/>
            <person name="Hilbert H."/>
            <person name="Borzym K."/>
            <person name="Langer I."/>
            <person name="Beck A."/>
            <person name="Lehrach H."/>
            <person name="Reinhardt R."/>
            <person name="Pohl T.M."/>
            <person name="Eger P."/>
            <person name="Zimmermann W."/>
            <person name="Wedler H."/>
            <person name="Wambutt R."/>
            <person name="Purnelle B."/>
            <person name="Goffeau A."/>
            <person name="Cadieu E."/>
            <person name="Dreano S."/>
            <person name="Gloux S."/>
            <person name="Lelaure V."/>
            <person name="Mottier S."/>
            <person name="Galibert F."/>
            <person name="Aves S.J."/>
            <person name="Xiang Z."/>
            <person name="Hunt C."/>
            <person name="Moore K."/>
            <person name="Hurst S.M."/>
            <person name="Lucas M."/>
            <person name="Rochet M."/>
            <person name="Gaillardin C."/>
            <person name="Tallada V.A."/>
            <person name="Garzon A."/>
            <person name="Thode G."/>
            <person name="Daga R.R."/>
            <person name="Cruzado L."/>
            <person name="Jimenez J."/>
            <person name="Sanchez M."/>
            <person name="del Rey F."/>
            <person name="Benito J."/>
            <person name="Dominguez A."/>
            <person name="Revuelta J.L."/>
            <person name="Moreno S."/>
            <person name="Armstrong J."/>
            <person name="Forsburg S.L."/>
            <person name="Cerutti L."/>
            <person name="Lowe T."/>
            <person name="McCombie W.R."/>
            <person name="Paulsen I."/>
            <person name="Potashkin J."/>
            <person name="Shpakovski G.V."/>
            <person name="Ussery D."/>
            <person name="Barrell B.G."/>
            <person name="Nurse P."/>
        </authorList>
    </citation>
    <scope>NUCLEOTIDE SEQUENCE [LARGE SCALE GENOMIC DNA]</scope>
    <source>
        <strain>972 / ATCC 24843</strain>
    </source>
</reference>
<reference key="2">
    <citation type="journal article" date="2006" name="Nat. Biotechnol.">
        <title>ORFeome cloning and global analysis of protein localization in the fission yeast Schizosaccharomyces pombe.</title>
        <authorList>
            <person name="Matsuyama A."/>
            <person name="Arai R."/>
            <person name="Yashiroda Y."/>
            <person name="Shirai A."/>
            <person name="Kamata A."/>
            <person name="Sekido S."/>
            <person name="Kobayashi Y."/>
            <person name="Hashimoto A."/>
            <person name="Hamamoto M."/>
            <person name="Hiraoka Y."/>
            <person name="Horinouchi S."/>
            <person name="Yoshida M."/>
        </authorList>
    </citation>
    <scope>SUBCELLULAR LOCATION [LARGE SCALE ANALYSIS]</scope>
</reference>
<dbReference type="EMBL" id="CU329671">
    <property type="protein sequence ID" value="CAA18387.1"/>
    <property type="molecule type" value="Genomic_DNA"/>
</dbReference>
<dbReference type="PIR" id="T40081">
    <property type="entry name" value="T40081"/>
</dbReference>
<dbReference type="RefSeq" id="NP_595838.1">
    <property type="nucleotide sequence ID" value="NM_001021742.2"/>
</dbReference>
<dbReference type="SMR" id="O59673"/>
<dbReference type="BioGRID" id="277125">
    <property type="interactions" value="72"/>
</dbReference>
<dbReference type="ComplexPortal" id="CPX-25764">
    <property type="entry name" value="Mitochondrial proton translocating ATP synthase complex"/>
</dbReference>
<dbReference type="FunCoup" id="O59673">
    <property type="interactions" value="67"/>
</dbReference>
<dbReference type="STRING" id="284812.O59673"/>
<dbReference type="iPTMnet" id="O59673"/>
<dbReference type="PaxDb" id="4896-SPBC29A3.10c.1"/>
<dbReference type="EnsemblFungi" id="SPBC29A3.10c.1">
    <property type="protein sequence ID" value="SPBC29A3.10c.1:pep"/>
    <property type="gene ID" value="SPBC29A3.10c"/>
</dbReference>
<dbReference type="GeneID" id="2540599"/>
<dbReference type="KEGG" id="spo:2540599"/>
<dbReference type="PomBase" id="SPBC29A3.10c">
    <property type="gene designation" value="atp14"/>
</dbReference>
<dbReference type="VEuPathDB" id="FungiDB:SPBC29A3.10c"/>
<dbReference type="HOGENOM" id="CLU_2185471_0_0_1"/>
<dbReference type="InParanoid" id="O59673"/>
<dbReference type="OMA" id="CFSRGYA"/>
<dbReference type="PRO" id="PR:O59673"/>
<dbReference type="Proteomes" id="UP000002485">
    <property type="component" value="Chromosome II"/>
</dbReference>
<dbReference type="GO" id="GO:0099617">
    <property type="term" value="C:matrix side of mitochondrial inner membrane"/>
    <property type="evidence" value="ECO:0000305"/>
    <property type="project" value="PomBase"/>
</dbReference>
<dbReference type="GO" id="GO:0005739">
    <property type="term" value="C:mitochondrion"/>
    <property type="evidence" value="ECO:0007005"/>
    <property type="project" value="PomBase"/>
</dbReference>
<dbReference type="GO" id="GO:0045259">
    <property type="term" value="C:proton-transporting ATP synthase complex"/>
    <property type="evidence" value="ECO:0000250"/>
    <property type="project" value="PomBase"/>
</dbReference>
<dbReference type="GO" id="GO:0015986">
    <property type="term" value="P:proton motive force-driven ATP synthesis"/>
    <property type="evidence" value="ECO:0000318"/>
    <property type="project" value="GO_Central"/>
</dbReference>
<dbReference type="GO" id="GO:0042776">
    <property type="term" value="P:proton motive force-driven mitochondrial ATP synthesis"/>
    <property type="evidence" value="ECO:0000250"/>
    <property type="project" value="PomBase"/>
</dbReference>
<dbReference type="GO" id="GO:1902600">
    <property type="term" value="P:proton transmembrane transport"/>
    <property type="evidence" value="ECO:0007669"/>
    <property type="project" value="UniProtKB-KW"/>
</dbReference>
<dbReference type="InterPro" id="IPR019711">
    <property type="entry name" value="ATP_synth_F0_suH"/>
</dbReference>
<dbReference type="PANTHER" id="PTHR28207">
    <property type="entry name" value="ATP SYNTHASE SUBUNIT H, MITOCHONDRIAL"/>
    <property type="match status" value="1"/>
</dbReference>
<dbReference type="PANTHER" id="PTHR28207:SF1">
    <property type="entry name" value="ATP SYNTHASE SUBUNIT H, MITOCHONDRIAL"/>
    <property type="match status" value="1"/>
</dbReference>
<dbReference type="Pfam" id="PF10775">
    <property type="entry name" value="ATP_sub_h"/>
    <property type="match status" value="1"/>
</dbReference>
<comment type="function">
    <text evidence="1">Mitochondrial membrane ATP synthase (F(1)F(0) ATP synthase or Complex V) produces ATP from ADP in the presence of a proton gradient across the membrane which is generated by electron transport complexes of the respiratory chain. F-type ATPases consist of two structural domains, F(1) - containing the extramembraneous catalytic core and F(0) - containing the membrane proton channel, linked together by a central stalk and a peripheral stalk. During catalysis, ATP synthesis in the catalytic domain of F(1) is coupled via a rotary mechanism of the central stalk subunits to proton translocation. Part of the complex F(0) domain. Minor subunit located with subunit a in the membrane (By similarity).</text>
</comment>
<comment type="subunit">
    <text evidence="1">F-type ATPases have 2 components, CF(1) - the catalytic core - and CF(0) - the membrane proton channel.</text>
</comment>
<comment type="subcellular location">
    <subcellularLocation>
        <location evidence="3">Mitochondrion</location>
    </subcellularLocation>
    <subcellularLocation>
        <location evidence="3">Mitochondrion inner membrane</location>
    </subcellularLocation>
</comment>
<comment type="similarity">
    <text evidence="4">Belongs to the ATPase h subunit family.</text>
</comment>
<gene>
    <name type="primary">atp14</name>
    <name type="ORF">SPBC29A3.10c</name>
</gene>
<evidence type="ECO:0000250" key="1"/>
<evidence type="ECO:0000255" key="2"/>
<evidence type="ECO:0000269" key="3">
    <source>
    </source>
</evidence>
<evidence type="ECO:0000305" key="4"/>
<proteinExistence type="inferred from homology"/>
<organism>
    <name type="scientific">Schizosaccharomyces pombe (strain 972 / ATCC 24843)</name>
    <name type="common">Fission yeast</name>
    <dbReference type="NCBI Taxonomy" id="284812"/>
    <lineage>
        <taxon>Eukaryota</taxon>
        <taxon>Fungi</taxon>
        <taxon>Dikarya</taxon>
        <taxon>Ascomycota</taxon>
        <taxon>Taphrinomycotina</taxon>
        <taxon>Schizosaccharomycetes</taxon>
        <taxon>Schizosaccharomycetales</taxon>
        <taxon>Schizosaccharomycetaceae</taxon>
        <taxon>Schizosaccharomyces</taxon>
    </lineage>
</organism>
<accession>O59673</accession>
<name>ATP14_SCHPO</name>
<protein>
    <recommendedName>
        <fullName>ATP synthase subunit H, mitochondrial</fullName>
    </recommendedName>
</protein>
<keyword id="KW-0066">ATP synthesis</keyword>
<keyword id="KW-0138">CF(0)</keyword>
<keyword id="KW-0375">Hydrogen ion transport</keyword>
<keyword id="KW-0406">Ion transport</keyword>
<keyword id="KW-0472">Membrane</keyword>
<keyword id="KW-0496">Mitochondrion</keyword>
<keyword id="KW-0999">Mitochondrion inner membrane</keyword>
<keyword id="KW-1185">Reference proteome</keyword>
<keyword id="KW-0809">Transit peptide</keyword>
<keyword id="KW-0813">Transport</keyword>
<feature type="transit peptide" description="Mitochondrion" evidence="2">
    <location>
        <begin position="1"/>
        <end position="26"/>
    </location>
</feature>
<feature type="chain" id="PRO_0000339126" description="ATP synthase subunit H, mitochondrial">
    <location>
        <begin position="27"/>
        <end position="103"/>
    </location>
</feature>
<sequence length="103" mass="11570">MSRILKSLSRSYSTTSPRLYVDVVQGLYISSLKSYKPKAVPSETAAEVKEWSMPSAPTAPKYDVDFTSALNSYKYEGETIPTKAAGESNKFDFLESYENEKEH</sequence>